<evidence type="ECO:0000255" key="1">
    <source>
        <dbReference type="HAMAP-Rule" id="MF_00176"/>
    </source>
</evidence>
<sequence>MAGWSILELLRSNPEALKEHVRKRLMDPAIVDRAYRLDVEWRRLLTMVNEVRRRHNEITRMIAKAGSREERERLIAEAKRLLREREDLEEKLKKVEREREEALLGLPNIVAPDVPVGDESATRPIEFWGKPKVWKGHVDAFREQTEAYGFKVDHEVIEWRPRGHADMMEEVLKLGDTLRAARVAGSRFYYLFEDLVFLDLALLMYAIDFMTSKGYVLVLPPYMLRYNVMSRVIDLETFKDAIYEIAGEDLYLIATAEHPLAALYYNSEIYDEDLPLKLVGVSPCFRKEAGAGNRDLKGIFRVHQFHKVEQFVYSLPEESSKLHEELISNAKEIFKGLEIPFRVVNIASGDLGACAVKKYDLEAWMPAQGKYREMVSASNCTDWQAYRLGIRLVRRKGMERGYVHTLNATAVASTRTITAILENFQDEEGVVAIPRALRRYLEVFKRAPTDAIHPRRRPPA</sequence>
<reference key="1">
    <citation type="journal article" date="1999" name="DNA Res.">
        <title>Complete genome sequence of an aerobic hyper-thermophilic crenarchaeon, Aeropyrum pernix K1.</title>
        <authorList>
            <person name="Kawarabayasi Y."/>
            <person name="Hino Y."/>
            <person name="Horikawa H."/>
            <person name="Yamazaki S."/>
            <person name="Haikawa Y."/>
            <person name="Jin-no K."/>
            <person name="Takahashi M."/>
            <person name="Sekine M."/>
            <person name="Baba S."/>
            <person name="Ankai A."/>
            <person name="Kosugi H."/>
            <person name="Hosoyama A."/>
            <person name="Fukui S."/>
            <person name="Nagai Y."/>
            <person name="Nishijima K."/>
            <person name="Nakazawa H."/>
            <person name="Takamiya M."/>
            <person name="Masuda S."/>
            <person name="Funahashi T."/>
            <person name="Tanaka T."/>
            <person name="Kudoh Y."/>
            <person name="Yamazaki J."/>
            <person name="Kushida N."/>
            <person name="Oguchi A."/>
            <person name="Aoki K."/>
            <person name="Kubota K."/>
            <person name="Nakamura Y."/>
            <person name="Nomura N."/>
            <person name="Sako Y."/>
            <person name="Kikuchi H."/>
        </authorList>
    </citation>
    <scope>NUCLEOTIDE SEQUENCE [LARGE SCALE GENOMIC DNA]</scope>
    <source>
        <strain>ATCC 700893 / DSM 11879 / JCM 9820 / NBRC 100138 / K1</strain>
    </source>
</reference>
<name>SYS_AERPE</name>
<keyword id="KW-0030">Aminoacyl-tRNA synthetase</keyword>
<keyword id="KW-0067">ATP-binding</keyword>
<keyword id="KW-0963">Cytoplasm</keyword>
<keyword id="KW-0436">Ligase</keyword>
<keyword id="KW-0547">Nucleotide-binding</keyword>
<keyword id="KW-0648">Protein biosynthesis</keyword>
<keyword id="KW-1185">Reference proteome</keyword>
<feature type="chain" id="PRO_0000122169" description="Serine--tRNA ligase">
    <location>
        <begin position="1"/>
        <end position="460"/>
    </location>
</feature>
<feature type="binding site" evidence="1">
    <location>
        <begin position="255"/>
        <end position="257"/>
    </location>
    <ligand>
        <name>L-serine</name>
        <dbReference type="ChEBI" id="CHEBI:33384"/>
    </ligand>
</feature>
<feature type="binding site" evidence="1">
    <location>
        <begin position="286"/>
        <end position="288"/>
    </location>
    <ligand>
        <name>ATP</name>
        <dbReference type="ChEBI" id="CHEBI:30616"/>
    </ligand>
</feature>
<feature type="binding site" evidence="1">
    <location>
        <position position="302"/>
    </location>
    <ligand>
        <name>ATP</name>
        <dbReference type="ChEBI" id="CHEBI:30616"/>
    </ligand>
</feature>
<feature type="binding site" evidence="1">
    <location>
        <position position="309"/>
    </location>
    <ligand>
        <name>L-serine</name>
        <dbReference type="ChEBI" id="CHEBI:33384"/>
    </ligand>
</feature>
<feature type="binding site" evidence="1">
    <location>
        <begin position="373"/>
        <end position="376"/>
    </location>
    <ligand>
        <name>ATP</name>
        <dbReference type="ChEBI" id="CHEBI:30616"/>
    </ligand>
</feature>
<feature type="binding site" evidence="1">
    <location>
        <position position="409"/>
    </location>
    <ligand>
        <name>L-serine</name>
        <dbReference type="ChEBI" id="CHEBI:33384"/>
    </ligand>
</feature>
<accession>Q9YAG3</accession>
<dbReference type="EC" id="6.1.1.11" evidence="1"/>
<dbReference type="EMBL" id="BA000002">
    <property type="protein sequence ID" value="BAA80986.2"/>
    <property type="molecule type" value="Genomic_DNA"/>
</dbReference>
<dbReference type="PIR" id="B72500">
    <property type="entry name" value="B72500"/>
</dbReference>
<dbReference type="RefSeq" id="WP_010866715.1">
    <property type="nucleotide sequence ID" value="NC_000854.2"/>
</dbReference>
<dbReference type="SMR" id="Q9YAG3"/>
<dbReference type="STRING" id="272557.APE_1976.1"/>
<dbReference type="EnsemblBacteria" id="BAA80986">
    <property type="protein sequence ID" value="BAA80986"/>
    <property type="gene ID" value="APE_1976.1"/>
</dbReference>
<dbReference type="GeneID" id="1446383"/>
<dbReference type="KEGG" id="ape:APE_1976.1"/>
<dbReference type="PATRIC" id="fig|272557.25.peg.1318"/>
<dbReference type="eggNOG" id="arCOG00403">
    <property type="taxonomic scope" value="Archaea"/>
</dbReference>
<dbReference type="UniPathway" id="UPA00906">
    <property type="reaction ID" value="UER00895"/>
</dbReference>
<dbReference type="Proteomes" id="UP000002518">
    <property type="component" value="Chromosome"/>
</dbReference>
<dbReference type="GO" id="GO:0005737">
    <property type="term" value="C:cytoplasm"/>
    <property type="evidence" value="ECO:0007669"/>
    <property type="project" value="UniProtKB-SubCell"/>
</dbReference>
<dbReference type="GO" id="GO:0005524">
    <property type="term" value="F:ATP binding"/>
    <property type="evidence" value="ECO:0007669"/>
    <property type="project" value="UniProtKB-UniRule"/>
</dbReference>
<dbReference type="GO" id="GO:0004828">
    <property type="term" value="F:serine-tRNA ligase activity"/>
    <property type="evidence" value="ECO:0007669"/>
    <property type="project" value="UniProtKB-UniRule"/>
</dbReference>
<dbReference type="GO" id="GO:0016260">
    <property type="term" value="P:selenocysteine biosynthetic process"/>
    <property type="evidence" value="ECO:0007669"/>
    <property type="project" value="UniProtKB-UniRule"/>
</dbReference>
<dbReference type="GO" id="GO:0006434">
    <property type="term" value="P:seryl-tRNA aminoacylation"/>
    <property type="evidence" value="ECO:0007669"/>
    <property type="project" value="UniProtKB-UniRule"/>
</dbReference>
<dbReference type="CDD" id="cd00770">
    <property type="entry name" value="SerRS_core"/>
    <property type="match status" value="1"/>
</dbReference>
<dbReference type="Gene3D" id="3.30.930.10">
    <property type="entry name" value="Bira Bifunctional Protein, Domain 2"/>
    <property type="match status" value="1"/>
</dbReference>
<dbReference type="Gene3D" id="1.10.287.40">
    <property type="entry name" value="Serine-tRNA synthetase, tRNA binding domain"/>
    <property type="match status" value="1"/>
</dbReference>
<dbReference type="HAMAP" id="MF_00176">
    <property type="entry name" value="Ser_tRNA_synth_type1"/>
    <property type="match status" value="1"/>
</dbReference>
<dbReference type="InterPro" id="IPR002314">
    <property type="entry name" value="aa-tRNA-synt_IIb"/>
</dbReference>
<dbReference type="InterPro" id="IPR006195">
    <property type="entry name" value="aa-tRNA-synth_II"/>
</dbReference>
<dbReference type="InterPro" id="IPR045864">
    <property type="entry name" value="aa-tRNA-synth_II/BPL/LPL"/>
</dbReference>
<dbReference type="InterPro" id="IPR002317">
    <property type="entry name" value="Ser-tRNA-ligase_type_1"/>
</dbReference>
<dbReference type="InterPro" id="IPR015866">
    <property type="entry name" value="Ser-tRNA-synth_1_N"/>
</dbReference>
<dbReference type="InterPro" id="IPR042103">
    <property type="entry name" value="SerRS_1_N_sf"/>
</dbReference>
<dbReference type="InterPro" id="IPR033729">
    <property type="entry name" value="SerRS_core"/>
</dbReference>
<dbReference type="InterPro" id="IPR010978">
    <property type="entry name" value="tRNA-bd_arm"/>
</dbReference>
<dbReference type="NCBIfam" id="TIGR00414">
    <property type="entry name" value="serS"/>
    <property type="match status" value="1"/>
</dbReference>
<dbReference type="PANTHER" id="PTHR11778">
    <property type="entry name" value="SERYL-TRNA SYNTHETASE"/>
    <property type="match status" value="1"/>
</dbReference>
<dbReference type="Pfam" id="PF02403">
    <property type="entry name" value="Seryl_tRNA_N"/>
    <property type="match status" value="1"/>
</dbReference>
<dbReference type="Pfam" id="PF00587">
    <property type="entry name" value="tRNA-synt_2b"/>
    <property type="match status" value="1"/>
</dbReference>
<dbReference type="PIRSF" id="PIRSF001529">
    <property type="entry name" value="Ser-tRNA-synth_IIa"/>
    <property type="match status" value="1"/>
</dbReference>
<dbReference type="PRINTS" id="PR00981">
    <property type="entry name" value="TRNASYNTHSER"/>
</dbReference>
<dbReference type="SUPFAM" id="SSF55681">
    <property type="entry name" value="Class II aaRS and biotin synthetases"/>
    <property type="match status" value="1"/>
</dbReference>
<dbReference type="SUPFAM" id="SSF46589">
    <property type="entry name" value="tRNA-binding arm"/>
    <property type="match status" value="1"/>
</dbReference>
<dbReference type="PROSITE" id="PS50862">
    <property type="entry name" value="AA_TRNA_LIGASE_II"/>
    <property type="match status" value="1"/>
</dbReference>
<protein>
    <recommendedName>
        <fullName evidence="1">Serine--tRNA ligase</fullName>
        <ecNumber evidence="1">6.1.1.11</ecNumber>
    </recommendedName>
    <alternativeName>
        <fullName evidence="1">Seryl-tRNA synthetase</fullName>
        <shortName evidence="1">SerRS</shortName>
    </alternativeName>
    <alternativeName>
        <fullName evidence="1">Seryl-tRNA(Ser/Sec) synthetase</fullName>
    </alternativeName>
</protein>
<proteinExistence type="inferred from homology"/>
<gene>
    <name evidence="1" type="primary">serS</name>
    <name type="ordered locus">APE_1976.1</name>
</gene>
<comment type="function">
    <text evidence="1">Catalyzes the attachment of serine to tRNA(Ser). Is also able to aminoacylate tRNA(Sec) with serine, to form the misacylated tRNA L-seryl-tRNA(Sec), which will be further converted into selenocysteinyl-tRNA(Sec).</text>
</comment>
<comment type="catalytic activity">
    <reaction evidence="1">
        <text>tRNA(Ser) + L-serine + ATP = L-seryl-tRNA(Ser) + AMP + diphosphate + H(+)</text>
        <dbReference type="Rhea" id="RHEA:12292"/>
        <dbReference type="Rhea" id="RHEA-COMP:9669"/>
        <dbReference type="Rhea" id="RHEA-COMP:9703"/>
        <dbReference type="ChEBI" id="CHEBI:15378"/>
        <dbReference type="ChEBI" id="CHEBI:30616"/>
        <dbReference type="ChEBI" id="CHEBI:33019"/>
        <dbReference type="ChEBI" id="CHEBI:33384"/>
        <dbReference type="ChEBI" id="CHEBI:78442"/>
        <dbReference type="ChEBI" id="CHEBI:78533"/>
        <dbReference type="ChEBI" id="CHEBI:456215"/>
        <dbReference type="EC" id="6.1.1.11"/>
    </reaction>
</comment>
<comment type="catalytic activity">
    <reaction evidence="1">
        <text>tRNA(Sec) + L-serine + ATP = L-seryl-tRNA(Sec) + AMP + diphosphate + H(+)</text>
        <dbReference type="Rhea" id="RHEA:42580"/>
        <dbReference type="Rhea" id="RHEA-COMP:9742"/>
        <dbReference type="Rhea" id="RHEA-COMP:10128"/>
        <dbReference type="ChEBI" id="CHEBI:15378"/>
        <dbReference type="ChEBI" id="CHEBI:30616"/>
        <dbReference type="ChEBI" id="CHEBI:33019"/>
        <dbReference type="ChEBI" id="CHEBI:33384"/>
        <dbReference type="ChEBI" id="CHEBI:78442"/>
        <dbReference type="ChEBI" id="CHEBI:78533"/>
        <dbReference type="ChEBI" id="CHEBI:456215"/>
        <dbReference type="EC" id="6.1.1.11"/>
    </reaction>
</comment>
<comment type="pathway">
    <text evidence="1">Aminoacyl-tRNA biosynthesis; selenocysteinyl-tRNA(Sec) biosynthesis; L-seryl-tRNA(Sec) from L-serine and tRNA(Sec): step 1/1.</text>
</comment>
<comment type="subunit">
    <text evidence="1">Homodimer. The tRNA molecule binds across the dimer.</text>
</comment>
<comment type="subcellular location">
    <subcellularLocation>
        <location evidence="1">Cytoplasm</location>
    </subcellularLocation>
</comment>
<comment type="domain">
    <text evidence="1">Consists of two distinct domains, a catalytic core and a N-terminal extension that is involved in tRNA binding.</text>
</comment>
<comment type="similarity">
    <text evidence="1">Belongs to the class-II aminoacyl-tRNA synthetase family. Type-1 seryl-tRNA synthetase subfamily.</text>
</comment>
<organism>
    <name type="scientific">Aeropyrum pernix (strain ATCC 700893 / DSM 11879 / JCM 9820 / NBRC 100138 / K1)</name>
    <dbReference type="NCBI Taxonomy" id="272557"/>
    <lineage>
        <taxon>Archaea</taxon>
        <taxon>Thermoproteota</taxon>
        <taxon>Thermoprotei</taxon>
        <taxon>Desulfurococcales</taxon>
        <taxon>Desulfurococcaceae</taxon>
        <taxon>Aeropyrum</taxon>
    </lineage>
</organism>